<protein>
    <recommendedName>
        <fullName>Deoxyribonuclease-1-like 1</fullName>
        <ecNumber>3.1.21.-</ecNumber>
    </recommendedName>
    <alternativeName>
        <fullName>DNase X</fullName>
    </alternativeName>
    <alternativeName>
        <fullName>Deoxyribonuclease I-like 1</fullName>
        <shortName>DNase I-like 1</shortName>
    </alternativeName>
    <alternativeName>
        <fullName>Muscle-specific DNase I-like</fullName>
    </alternativeName>
    <alternativeName>
        <fullName>XIB</fullName>
    </alternativeName>
</protein>
<evidence type="ECO:0000250" key="1"/>
<evidence type="ECO:0000255" key="2"/>
<evidence type="ECO:0000269" key="3">
    <source>
    </source>
</evidence>
<evidence type="ECO:0000269" key="4">
    <source>
    </source>
</evidence>
<evidence type="ECO:0000305" key="5"/>
<keyword id="KW-1015">Disulfide bond</keyword>
<keyword id="KW-0255">Endonuclease</keyword>
<keyword id="KW-0256">Endoplasmic reticulum</keyword>
<keyword id="KW-0325">Glycoprotein</keyword>
<keyword id="KW-0378">Hydrolase</keyword>
<keyword id="KW-0540">Nuclease</keyword>
<keyword id="KW-1267">Proteomics identification</keyword>
<keyword id="KW-1185">Reference proteome</keyword>
<keyword id="KW-0732">Signal</keyword>
<proteinExistence type="evidence at protein level"/>
<organism>
    <name type="scientific">Homo sapiens</name>
    <name type="common">Human</name>
    <dbReference type="NCBI Taxonomy" id="9606"/>
    <lineage>
        <taxon>Eukaryota</taxon>
        <taxon>Metazoa</taxon>
        <taxon>Chordata</taxon>
        <taxon>Craniata</taxon>
        <taxon>Vertebrata</taxon>
        <taxon>Euteleostomi</taxon>
        <taxon>Mammalia</taxon>
        <taxon>Eutheria</taxon>
        <taxon>Euarchontoglires</taxon>
        <taxon>Primates</taxon>
        <taxon>Haplorrhini</taxon>
        <taxon>Catarrhini</taxon>
        <taxon>Hominidae</taxon>
        <taxon>Homo</taxon>
    </lineage>
</organism>
<gene>
    <name type="primary">DNASE1L1</name>
    <name type="synonym">DNAS1L1</name>
    <name type="synonym">DNL1L</name>
</gene>
<accession>P49184</accession>
<accession>D3DWW7</accession>
<accession>Q5HY41</accession>
<dbReference type="EC" id="3.1.21.-"/>
<dbReference type="EMBL" id="X90392">
    <property type="protein sequence ID" value="CAA62037.1"/>
    <property type="molecule type" value="mRNA"/>
</dbReference>
<dbReference type="EMBL" id="L40817">
    <property type="protein sequence ID" value="AAB00495.1"/>
    <property type="molecule type" value="Genomic_DNA"/>
</dbReference>
<dbReference type="EMBL" id="L40823">
    <property type="protein sequence ID" value="AAB00496.1"/>
    <property type="molecule type" value="mRNA"/>
</dbReference>
<dbReference type="EMBL" id="L44140">
    <property type="protein sequence ID" value="AAA92647.1"/>
    <property type="molecule type" value="Genomic_DNA"/>
</dbReference>
<dbReference type="EMBL" id="U06846">
    <property type="protein sequence ID" value="AAB17022.1"/>
    <property type="molecule type" value="mRNA"/>
</dbReference>
<dbReference type="EMBL" id="BX936347">
    <property type="status" value="NOT_ANNOTATED_CDS"/>
    <property type="molecule type" value="Genomic_DNA"/>
</dbReference>
<dbReference type="EMBL" id="CH471172">
    <property type="protein sequence ID" value="EAW72731.1"/>
    <property type="molecule type" value="Genomic_DNA"/>
</dbReference>
<dbReference type="EMBL" id="CH471172">
    <property type="protein sequence ID" value="EAW72732.1"/>
    <property type="molecule type" value="Genomic_DNA"/>
</dbReference>
<dbReference type="EMBL" id="CH471172">
    <property type="protein sequence ID" value="EAW72733.1"/>
    <property type="molecule type" value="Genomic_DNA"/>
</dbReference>
<dbReference type="EMBL" id="CH471172">
    <property type="protein sequence ID" value="EAW72734.1"/>
    <property type="molecule type" value="Genomic_DNA"/>
</dbReference>
<dbReference type="EMBL" id="CH471172">
    <property type="protein sequence ID" value="EAW72735.1"/>
    <property type="molecule type" value="Genomic_DNA"/>
</dbReference>
<dbReference type="EMBL" id="BC001561">
    <property type="protein sequence ID" value="AAH01561.1"/>
    <property type="molecule type" value="mRNA"/>
</dbReference>
<dbReference type="EMBL" id="BC028092">
    <property type="protein sequence ID" value="AAH28092.1"/>
    <property type="molecule type" value="mRNA"/>
</dbReference>
<dbReference type="CCDS" id="CCDS14747.1"/>
<dbReference type="PIR" id="JC4633">
    <property type="entry name" value="JC4633"/>
</dbReference>
<dbReference type="RefSeq" id="NP_001009932.1">
    <property type="nucleotide sequence ID" value="NM_001009932.3"/>
</dbReference>
<dbReference type="RefSeq" id="NP_001009933.1">
    <property type="nucleotide sequence ID" value="NM_001009933.3"/>
</dbReference>
<dbReference type="RefSeq" id="NP_001009934.1">
    <property type="nucleotide sequence ID" value="NM_001009934.3"/>
</dbReference>
<dbReference type="RefSeq" id="NP_001290549.1">
    <property type="nucleotide sequence ID" value="NM_001303620.2"/>
</dbReference>
<dbReference type="RefSeq" id="NP_006721.1">
    <property type="nucleotide sequence ID" value="NM_006730.4"/>
</dbReference>
<dbReference type="RefSeq" id="XP_005277886.1">
    <property type="nucleotide sequence ID" value="XM_005277829.5"/>
</dbReference>
<dbReference type="RefSeq" id="XP_011529424.1">
    <property type="nucleotide sequence ID" value="XM_011531122.2"/>
</dbReference>
<dbReference type="RefSeq" id="XP_016884821.1">
    <property type="nucleotide sequence ID" value="XM_017029332.2"/>
</dbReference>
<dbReference type="RefSeq" id="XP_047297846.1">
    <property type="nucleotide sequence ID" value="XM_047441890.1"/>
</dbReference>
<dbReference type="RefSeq" id="XP_047297847.1">
    <property type="nucleotide sequence ID" value="XM_047441891.1"/>
</dbReference>
<dbReference type="RefSeq" id="XP_047297848.1">
    <property type="nucleotide sequence ID" value="XM_047441892.1"/>
</dbReference>
<dbReference type="RefSeq" id="XP_047297849.1">
    <property type="nucleotide sequence ID" value="XM_047441893.1"/>
</dbReference>
<dbReference type="RefSeq" id="XP_054182607.1">
    <property type="nucleotide sequence ID" value="XM_054326632.1"/>
</dbReference>
<dbReference type="RefSeq" id="XP_054182608.1">
    <property type="nucleotide sequence ID" value="XM_054326633.1"/>
</dbReference>
<dbReference type="RefSeq" id="XP_054182609.1">
    <property type="nucleotide sequence ID" value="XM_054326634.1"/>
</dbReference>
<dbReference type="RefSeq" id="XP_054182610.1">
    <property type="nucleotide sequence ID" value="XM_054326635.1"/>
</dbReference>
<dbReference type="RefSeq" id="XP_054182611.1">
    <property type="nucleotide sequence ID" value="XM_054326636.1"/>
</dbReference>
<dbReference type="RefSeq" id="XP_054182612.1">
    <property type="nucleotide sequence ID" value="XM_054326637.1"/>
</dbReference>
<dbReference type="SMR" id="P49184"/>
<dbReference type="BioGRID" id="108113">
    <property type="interactions" value="139"/>
</dbReference>
<dbReference type="FunCoup" id="P49184">
    <property type="interactions" value="90"/>
</dbReference>
<dbReference type="IntAct" id="P49184">
    <property type="interactions" value="122"/>
</dbReference>
<dbReference type="STRING" id="9606.ENSP00000358824"/>
<dbReference type="GlyCosmos" id="P49184">
    <property type="glycosylation" value="1 site, No reported glycans"/>
</dbReference>
<dbReference type="GlyGen" id="P49184">
    <property type="glycosylation" value="1 site"/>
</dbReference>
<dbReference type="iPTMnet" id="P49184"/>
<dbReference type="PhosphoSitePlus" id="P49184"/>
<dbReference type="BioMuta" id="DNASE1L1"/>
<dbReference type="DMDM" id="1352319"/>
<dbReference type="jPOST" id="P49184"/>
<dbReference type="MassIVE" id="P49184"/>
<dbReference type="PaxDb" id="9606-ENSP00000358824"/>
<dbReference type="PeptideAtlas" id="P49184"/>
<dbReference type="ProteomicsDB" id="55967"/>
<dbReference type="Pumba" id="P49184"/>
<dbReference type="Antibodypedia" id="31202">
    <property type="antibodies" value="171 antibodies from 24 providers"/>
</dbReference>
<dbReference type="DNASU" id="1774"/>
<dbReference type="Ensembl" id="ENST00000014935.7">
    <property type="protein sequence ID" value="ENSP00000014935.3"/>
    <property type="gene ID" value="ENSG00000013563.14"/>
</dbReference>
<dbReference type="Ensembl" id="ENST00000309585.9">
    <property type="protein sequence ID" value="ENSP00000309168.5"/>
    <property type="gene ID" value="ENSG00000013563.14"/>
</dbReference>
<dbReference type="Ensembl" id="ENST00000369807.6">
    <property type="protein sequence ID" value="ENSP00000358822.1"/>
    <property type="gene ID" value="ENSG00000013563.14"/>
</dbReference>
<dbReference type="Ensembl" id="ENST00000369808.7">
    <property type="protein sequence ID" value="ENSP00000358823.3"/>
    <property type="gene ID" value="ENSG00000013563.14"/>
</dbReference>
<dbReference type="Ensembl" id="ENST00000369809.5">
    <property type="protein sequence ID" value="ENSP00000358824.1"/>
    <property type="gene ID" value="ENSG00000013563.14"/>
</dbReference>
<dbReference type="Ensembl" id="ENST00000393638.5">
    <property type="protein sequence ID" value="ENSP00000377255.1"/>
    <property type="gene ID" value="ENSG00000013563.14"/>
</dbReference>
<dbReference type="GeneID" id="1774"/>
<dbReference type="KEGG" id="hsa:1774"/>
<dbReference type="MANE-Select" id="ENST00000369807.6">
    <property type="protein sequence ID" value="ENSP00000358822.1"/>
    <property type="RefSeq nucleotide sequence ID" value="NM_001303620.2"/>
    <property type="RefSeq protein sequence ID" value="NP_001290549.1"/>
</dbReference>
<dbReference type="UCSC" id="uc033fbh.2">
    <property type="organism name" value="human"/>
</dbReference>
<dbReference type="AGR" id="HGNC:2957"/>
<dbReference type="CTD" id="1774"/>
<dbReference type="DisGeNET" id="1774"/>
<dbReference type="GeneCards" id="DNASE1L1"/>
<dbReference type="HGNC" id="HGNC:2957">
    <property type="gene designation" value="DNASE1L1"/>
</dbReference>
<dbReference type="HPA" id="ENSG00000013563">
    <property type="expression patterns" value="Tissue enhanced (skeletal)"/>
</dbReference>
<dbReference type="MalaCards" id="DNASE1L1"/>
<dbReference type="MIM" id="300081">
    <property type="type" value="gene"/>
</dbReference>
<dbReference type="neXtProt" id="NX_P49184"/>
<dbReference type="OpenTargets" id="ENSG00000013563"/>
<dbReference type="PharmGKB" id="PA27428"/>
<dbReference type="VEuPathDB" id="HostDB:ENSG00000013563"/>
<dbReference type="eggNOG" id="ENOG502QPNY">
    <property type="taxonomic scope" value="Eukaryota"/>
</dbReference>
<dbReference type="GeneTree" id="ENSGT00950000182846"/>
<dbReference type="HOGENOM" id="CLU_043335_1_0_1"/>
<dbReference type="InParanoid" id="P49184"/>
<dbReference type="OMA" id="LNFYQYE"/>
<dbReference type="OrthoDB" id="10061407at2759"/>
<dbReference type="PAN-GO" id="P49184">
    <property type="GO annotations" value="4 GO annotations based on evolutionary models"/>
</dbReference>
<dbReference type="PhylomeDB" id="P49184"/>
<dbReference type="TreeFam" id="TF329541"/>
<dbReference type="PathwayCommons" id="P49184"/>
<dbReference type="Reactome" id="R-HSA-6798695">
    <property type="pathway name" value="Neutrophil degranulation"/>
</dbReference>
<dbReference type="SignaLink" id="P49184"/>
<dbReference type="BioGRID-ORCS" id="1774">
    <property type="hits" value="20 hits in 782 CRISPR screens"/>
</dbReference>
<dbReference type="ChiTaRS" id="DNASE1L1">
    <property type="organism name" value="human"/>
</dbReference>
<dbReference type="GeneWiki" id="DNASE1L1"/>
<dbReference type="GenomeRNAi" id="1774"/>
<dbReference type="Pharos" id="P49184">
    <property type="development level" value="Tbio"/>
</dbReference>
<dbReference type="PRO" id="PR:P49184"/>
<dbReference type="Proteomes" id="UP000005640">
    <property type="component" value="Chromosome X"/>
</dbReference>
<dbReference type="RNAct" id="P49184">
    <property type="molecule type" value="protein"/>
</dbReference>
<dbReference type="Bgee" id="ENSG00000013563">
    <property type="expression patterns" value="Expressed in hindlimb stylopod muscle and 194 other cell types or tissues"/>
</dbReference>
<dbReference type="ExpressionAtlas" id="P49184">
    <property type="expression patterns" value="baseline and differential"/>
</dbReference>
<dbReference type="GO" id="GO:0005783">
    <property type="term" value="C:endoplasmic reticulum"/>
    <property type="evidence" value="ECO:0000314"/>
    <property type="project" value="LIFEdb"/>
</dbReference>
<dbReference type="GO" id="GO:0005576">
    <property type="term" value="C:extracellular region"/>
    <property type="evidence" value="ECO:0000304"/>
    <property type="project" value="Reactome"/>
</dbReference>
<dbReference type="GO" id="GO:0005634">
    <property type="term" value="C:nucleus"/>
    <property type="evidence" value="ECO:0000318"/>
    <property type="project" value="GO_Central"/>
</dbReference>
<dbReference type="GO" id="GO:0035580">
    <property type="term" value="C:specific granule lumen"/>
    <property type="evidence" value="ECO:0000304"/>
    <property type="project" value="Reactome"/>
</dbReference>
<dbReference type="GO" id="GO:0004530">
    <property type="term" value="F:deoxyribonuclease I activity"/>
    <property type="evidence" value="ECO:0000318"/>
    <property type="project" value="GO_Central"/>
</dbReference>
<dbReference type="GO" id="GO:0003677">
    <property type="term" value="F:DNA binding"/>
    <property type="evidence" value="ECO:0000318"/>
    <property type="project" value="GO_Central"/>
</dbReference>
<dbReference type="GO" id="GO:0004536">
    <property type="term" value="F:DNA nuclease activity"/>
    <property type="evidence" value="ECO:0000304"/>
    <property type="project" value="ProtInc"/>
</dbReference>
<dbReference type="GO" id="GO:0006308">
    <property type="term" value="P:DNA catabolic process"/>
    <property type="evidence" value="ECO:0000318"/>
    <property type="project" value="GO_Central"/>
</dbReference>
<dbReference type="GO" id="GO:0006259">
    <property type="term" value="P:DNA metabolic process"/>
    <property type="evidence" value="ECO:0000304"/>
    <property type="project" value="ProtInc"/>
</dbReference>
<dbReference type="CDD" id="cd10282">
    <property type="entry name" value="DNase1"/>
    <property type="match status" value="1"/>
</dbReference>
<dbReference type="FunFam" id="3.60.10.10:FF:000007">
    <property type="entry name" value="Deoxyribonuclease"/>
    <property type="match status" value="1"/>
</dbReference>
<dbReference type="Gene3D" id="3.60.10.10">
    <property type="entry name" value="Endonuclease/exonuclease/phosphatase"/>
    <property type="match status" value="1"/>
</dbReference>
<dbReference type="InterPro" id="IPR018057">
    <property type="entry name" value="Deoxyribonuclease-1_AS"/>
</dbReference>
<dbReference type="InterPro" id="IPR016202">
    <property type="entry name" value="DNase_I"/>
</dbReference>
<dbReference type="InterPro" id="IPR033125">
    <property type="entry name" value="DNASE_I_2"/>
</dbReference>
<dbReference type="InterPro" id="IPR036691">
    <property type="entry name" value="Endo/exonu/phosph_ase_sf"/>
</dbReference>
<dbReference type="InterPro" id="IPR005135">
    <property type="entry name" value="Endo/exonuclease/phosphatase"/>
</dbReference>
<dbReference type="PANTHER" id="PTHR11371">
    <property type="entry name" value="DEOXYRIBONUCLEASE"/>
    <property type="match status" value="1"/>
</dbReference>
<dbReference type="PANTHER" id="PTHR11371:SF28">
    <property type="entry name" value="DEOXYRIBONUCLEASE-1-LIKE 1"/>
    <property type="match status" value="1"/>
</dbReference>
<dbReference type="Pfam" id="PF03372">
    <property type="entry name" value="Exo_endo_phos"/>
    <property type="match status" value="1"/>
</dbReference>
<dbReference type="PIRSF" id="PIRSF000988">
    <property type="entry name" value="DNase_I_euk"/>
    <property type="match status" value="1"/>
</dbReference>
<dbReference type="PRINTS" id="PR00130">
    <property type="entry name" value="DNASEI"/>
</dbReference>
<dbReference type="SMART" id="SM00476">
    <property type="entry name" value="DNaseIc"/>
    <property type="match status" value="1"/>
</dbReference>
<dbReference type="SUPFAM" id="SSF56219">
    <property type="entry name" value="DNase I-like"/>
    <property type="match status" value="1"/>
</dbReference>
<dbReference type="PROSITE" id="PS00919">
    <property type="entry name" value="DNASE_I_1"/>
    <property type="match status" value="1"/>
</dbReference>
<dbReference type="PROSITE" id="PS00918">
    <property type="entry name" value="DNASE_I_2"/>
    <property type="match status" value="1"/>
</dbReference>
<reference key="1">
    <citation type="journal article" date="1996" name="Cell Death Differ.">
        <title>Isolation, differential splicing and protein expression of a DNase on the human X chromosome.</title>
        <authorList>
            <person name="Coy J.F."/>
            <person name="Velhagen I."/>
            <person name="Himmele R."/>
            <person name="Delius H."/>
            <person name="Poustka A."/>
            <person name="Zentgraf H."/>
        </authorList>
    </citation>
    <scope>NUCLEOTIDE SEQUENCE [MRNA]</scope>
</reference>
<reference key="2">
    <citation type="journal article" date="1995" name="Hum. Mol. Genet.">
        <title>A muscle-specific DNase I-like gene in human Xq28.</title>
        <authorList>
            <person name="Parrish J.E."/>
            <person name="Ciccodicola A."/>
            <person name="Wehnert M."/>
            <person name="Cox G.F."/>
            <person name="Chen E."/>
            <person name="Nelson D.L."/>
        </authorList>
    </citation>
    <scope>NUCLEOTIDE SEQUENCE [GENOMIC DNA / MRNA]</scope>
    <scope>TISSUE SPECIFICITY</scope>
    <source>
        <tissue>Heart</tissue>
    </source>
</reference>
<reference key="3">
    <citation type="journal article" date="1996" name="Hum. Mol. Genet.">
        <title>Long-range sequence analysis in Xq28: thirteen known and six candidate genes in 219.4 kb of high GC DNA between the RCP/GCP and G6PD loci.</title>
        <authorList>
            <person name="Chen E.Y."/>
            <person name="Zollo M."/>
            <person name="Mazzarella R.A."/>
            <person name="Ciccodicola A."/>
            <person name="Chen C.-N."/>
            <person name="Zuo L."/>
            <person name="Heiner C."/>
            <person name="Burough F.W."/>
            <person name="Ripetto M."/>
            <person name="Schlessinger D."/>
            <person name="D'Urso M."/>
        </authorList>
    </citation>
    <scope>NUCLEOTIDE SEQUENCE [GENOMIC DNA]</scope>
</reference>
<reference key="4">
    <citation type="journal article" date="1996" name="Gene">
        <title>Cloning of a gene encoding a DNase I-like endonuclease in the human Xq28 region.</title>
        <authorList>
            <person name="Pergolizzi R."/>
            <person name="Appierto V."/>
            <person name="Bosetti A."/>
            <person name="Debellis G.L."/>
            <person name="Rovida E."/>
            <person name="Biunno I."/>
        </authorList>
    </citation>
    <scope>NUCLEOTIDE SEQUENCE [MRNA]</scope>
    <source>
        <tissue>Muscle</tissue>
    </source>
</reference>
<reference key="5">
    <citation type="journal article" date="2005" name="Nature">
        <title>The DNA sequence of the human X chromosome.</title>
        <authorList>
            <person name="Ross M.T."/>
            <person name="Grafham D.V."/>
            <person name="Coffey A.J."/>
            <person name="Scherer S."/>
            <person name="McLay K."/>
            <person name="Muzny D."/>
            <person name="Platzer M."/>
            <person name="Howell G.R."/>
            <person name="Burrows C."/>
            <person name="Bird C.P."/>
            <person name="Frankish A."/>
            <person name="Lovell F.L."/>
            <person name="Howe K.L."/>
            <person name="Ashurst J.L."/>
            <person name="Fulton R.S."/>
            <person name="Sudbrak R."/>
            <person name="Wen G."/>
            <person name="Jones M.C."/>
            <person name="Hurles M.E."/>
            <person name="Andrews T.D."/>
            <person name="Scott C.E."/>
            <person name="Searle S."/>
            <person name="Ramser J."/>
            <person name="Whittaker A."/>
            <person name="Deadman R."/>
            <person name="Carter N.P."/>
            <person name="Hunt S.E."/>
            <person name="Chen R."/>
            <person name="Cree A."/>
            <person name="Gunaratne P."/>
            <person name="Havlak P."/>
            <person name="Hodgson A."/>
            <person name="Metzker M.L."/>
            <person name="Richards S."/>
            <person name="Scott G."/>
            <person name="Steffen D."/>
            <person name="Sodergren E."/>
            <person name="Wheeler D.A."/>
            <person name="Worley K.C."/>
            <person name="Ainscough R."/>
            <person name="Ambrose K.D."/>
            <person name="Ansari-Lari M.A."/>
            <person name="Aradhya S."/>
            <person name="Ashwell R.I."/>
            <person name="Babbage A.K."/>
            <person name="Bagguley C.L."/>
            <person name="Ballabio A."/>
            <person name="Banerjee R."/>
            <person name="Barker G.E."/>
            <person name="Barlow K.F."/>
            <person name="Barrett I.P."/>
            <person name="Bates K.N."/>
            <person name="Beare D.M."/>
            <person name="Beasley H."/>
            <person name="Beasley O."/>
            <person name="Beck A."/>
            <person name="Bethel G."/>
            <person name="Blechschmidt K."/>
            <person name="Brady N."/>
            <person name="Bray-Allen S."/>
            <person name="Bridgeman A.M."/>
            <person name="Brown A.J."/>
            <person name="Brown M.J."/>
            <person name="Bonnin D."/>
            <person name="Bruford E.A."/>
            <person name="Buhay C."/>
            <person name="Burch P."/>
            <person name="Burford D."/>
            <person name="Burgess J."/>
            <person name="Burrill W."/>
            <person name="Burton J."/>
            <person name="Bye J.M."/>
            <person name="Carder C."/>
            <person name="Carrel L."/>
            <person name="Chako J."/>
            <person name="Chapman J.C."/>
            <person name="Chavez D."/>
            <person name="Chen E."/>
            <person name="Chen G."/>
            <person name="Chen Y."/>
            <person name="Chen Z."/>
            <person name="Chinault C."/>
            <person name="Ciccodicola A."/>
            <person name="Clark S.Y."/>
            <person name="Clarke G."/>
            <person name="Clee C.M."/>
            <person name="Clegg S."/>
            <person name="Clerc-Blankenburg K."/>
            <person name="Clifford K."/>
            <person name="Cobley V."/>
            <person name="Cole C.G."/>
            <person name="Conquer J.S."/>
            <person name="Corby N."/>
            <person name="Connor R.E."/>
            <person name="David R."/>
            <person name="Davies J."/>
            <person name="Davis C."/>
            <person name="Davis J."/>
            <person name="Delgado O."/>
            <person name="Deshazo D."/>
            <person name="Dhami P."/>
            <person name="Ding Y."/>
            <person name="Dinh H."/>
            <person name="Dodsworth S."/>
            <person name="Draper H."/>
            <person name="Dugan-Rocha S."/>
            <person name="Dunham A."/>
            <person name="Dunn M."/>
            <person name="Durbin K.J."/>
            <person name="Dutta I."/>
            <person name="Eades T."/>
            <person name="Ellwood M."/>
            <person name="Emery-Cohen A."/>
            <person name="Errington H."/>
            <person name="Evans K.L."/>
            <person name="Faulkner L."/>
            <person name="Francis F."/>
            <person name="Frankland J."/>
            <person name="Fraser A.E."/>
            <person name="Galgoczy P."/>
            <person name="Gilbert J."/>
            <person name="Gill R."/>
            <person name="Gloeckner G."/>
            <person name="Gregory S.G."/>
            <person name="Gribble S."/>
            <person name="Griffiths C."/>
            <person name="Grocock R."/>
            <person name="Gu Y."/>
            <person name="Gwilliam R."/>
            <person name="Hamilton C."/>
            <person name="Hart E.A."/>
            <person name="Hawes A."/>
            <person name="Heath P.D."/>
            <person name="Heitmann K."/>
            <person name="Hennig S."/>
            <person name="Hernandez J."/>
            <person name="Hinzmann B."/>
            <person name="Ho S."/>
            <person name="Hoffs M."/>
            <person name="Howden P.J."/>
            <person name="Huckle E.J."/>
            <person name="Hume J."/>
            <person name="Hunt P.J."/>
            <person name="Hunt A.R."/>
            <person name="Isherwood J."/>
            <person name="Jacob L."/>
            <person name="Johnson D."/>
            <person name="Jones S."/>
            <person name="de Jong P.J."/>
            <person name="Joseph S.S."/>
            <person name="Keenan S."/>
            <person name="Kelly S."/>
            <person name="Kershaw J.K."/>
            <person name="Khan Z."/>
            <person name="Kioschis P."/>
            <person name="Klages S."/>
            <person name="Knights A.J."/>
            <person name="Kosiura A."/>
            <person name="Kovar-Smith C."/>
            <person name="Laird G.K."/>
            <person name="Langford C."/>
            <person name="Lawlor S."/>
            <person name="Leversha M."/>
            <person name="Lewis L."/>
            <person name="Liu W."/>
            <person name="Lloyd C."/>
            <person name="Lloyd D.M."/>
            <person name="Loulseged H."/>
            <person name="Loveland J.E."/>
            <person name="Lovell J.D."/>
            <person name="Lozado R."/>
            <person name="Lu J."/>
            <person name="Lyne R."/>
            <person name="Ma J."/>
            <person name="Maheshwari M."/>
            <person name="Matthews L.H."/>
            <person name="McDowall J."/>
            <person name="McLaren S."/>
            <person name="McMurray A."/>
            <person name="Meidl P."/>
            <person name="Meitinger T."/>
            <person name="Milne S."/>
            <person name="Miner G."/>
            <person name="Mistry S.L."/>
            <person name="Morgan M."/>
            <person name="Morris S."/>
            <person name="Mueller I."/>
            <person name="Mullikin J.C."/>
            <person name="Nguyen N."/>
            <person name="Nordsiek G."/>
            <person name="Nyakatura G."/>
            <person name="O'dell C.N."/>
            <person name="Okwuonu G."/>
            <person name="Palmer S."/>
            <person name="Pandian R."/>
            <person name="Parker D."/>
            <person name="Parrish J."/>
            <person name="Pasternak S."/>
            <person name="Patel D."/>
            <person name="Pearce A.V."/>
            <person name="Pearson D.M."/>
            <person name="Pelan S.E."/>
            <person name="Perez L."/>
            <person name="Porter K.M."/>
            <person name="Ramsey Y."/>
            <person name="Reichwald K."/>
            <person name="Rhodes S."/>
            <person name="Ridler K.A."/>
            <person name="Schlessinger D."/>
            <person name="Schueler M.G."/>
            <person name="Sehra H.K."/>
            <person name="Shaw-Smith C."/>
            <person name="Shen H."/>
            <person name="Sheridan E.M."/>
            <person name="Shownkeen R."/>
            <person name="Skuce C.D."/>
            <person name="Smith M.L."/>
            <person name="Sotheran E.C."/>
            <person name="Steingruber H.E."/>
            <person name="Steward C.A."/>
            <person name="Storey R."/>
            <person name="Swann R.M."/>
            <person name="Swarbreck D."/>
            <person name="Tabor P.E."/>
            <person name="Taudien S."/>
            <person name="Taylor T."/>
            <person name="Teague B."/>
            <person name="Thomas K."/>
            <person name="Thorpe A."/>
            <person name="Timms K."/>
            <person name="Tracey A."/>
            <person name="Trevanion S."/>
            <person name="Tromans A.C."/>
            <person name="d'Urso M."/>
            <person name="Verduzco D."/>
            <person name="Villasana D."/>
            <person name="Waldron L."/>
            <person name="Wall M."/>
            <person name="Wang Q."/>
            <person name="Warren J."/>
            <person name="Warry G.L."/>
            <person name="Wei X."/>
            <person name="West A."/>
            <person name="Whitehead S.L."/>
            <person name="Whiteley M.N."/>
            <person name="Wilkinson J.E."/>
            <person name="Willey D.L."/>
            <person name="Williams G."/>
            <person name="Williams L."/>
            <person name="Williamson A."/>
            <person name="Williamson H."/>
            <person name="Wilming L."/>
            <person name="Woodmansey R.L."/>
            <person name="Wray P.W."/>
            <person name="Yen J."/>
            <person name="Zhang J."/>
            <person name="Zhou J."/>
            <person name="Zoghbi H."/>
            <person name="Zorilla S."/>
            <person name="Buck D."/>
            <person name="Reinhardt R."/>
            <person name="Poustka A."/>
            <person name="Rosenthal A."/>
            <person name="Lehrach H."/>
            <person name="Meindl A."/>
            <person name="Minx P.J."/>
            <person name="Hillier L.W."/>
            <person name="Willard H.F."/>
            <person name="Wilson R.K."/>
            <person name="Waterston R.H."/>
            <person name="Rice C.M."/>
            <person name="Vaudin M."/>
            <person name="Coulson A."/>
            <person name="Nelson D.L."/>
            <person name="Weinstock G."/>
            <person name="Sulston J.E."/>
            <person name="Durbin R.M."/>
            <person name="Hubbard T."/>
            <person name="Gibbs R.A."/>
            <person name="Beck S."/>
            <person name="Rogers J."/>
            <person name="Bentley D.R."/>
        </authorList>
    </citation>
    <scope>NUCLEOTIDE SEQUENCE [LARGE SCALE GENOMIC DNA]</scope>
</reference>
<reference key="6">
    <citation type="submission" date="2005-09" db="EMBL/GenBank/DDBJ databases">
        <authorList>
            <person name="Mural R.J."/>
            <person name="Istrail S."/>
            <person name="Sutton G.G."/>
            <person name="Florea L."/>
            <person name="Halpern A.L."/>
            <person name="Mobarry C.M."/>
            <person name="Lippert R."/>
            <person name="Walenz B."/>
            <person name="Shatkay H."/>
            <person name="Dew I."/>
            <person name="Miller J.R."/>
            <person name="Flanigan M.J."/>
            <person name="Edwards N.J."/>
            <person name="Bolanos R."/>
            <person name="Fasulo D."/>
            <person name="Halldorsson B.V."/>
            <person name="Hannenhalli S."/>
            <person name="Turner R."/>
            <person name="Yooseph S."/>
            <person name="Lu F."/>
            <person name="Nusskern D.R."/>
            <person name="Shue B.C."/>
            <person name="Zheng X.H."/>
            <person name="Zhong F."/>
            <person name="Delcher A.L."/>
            <person name="Huson D.H."/>
            <person name="Kravitz S.A."/>
            <person name="Mouchard L."/>
            <person name="Reinert K."/>
            <person name="Remington K.A."/>
            <person name="Clark A.G."/>
            <person name="Waterman M.S."/>
            <person name="Eichler E.E."/>
            <person name="Adams M.D."/>
            <person name="Hunkapiller M.W."/>
            <person name="Myers E.W."/>
            <person name="Venter J.C."/>
        </authorList>
    </citation>
    <scope>NUCLEOTIDE SEQUENCE [LARGE SCALE GENOMIC DNA]</scope>
</reference>
<reference key="7">
    <citation type="journal article" date="2004" name="Genome Res.">
        <title>The status, quality, and expansion of the NIH full-length cDNA project: the Mammalian Gene Collection (MGC).</title>
        <authorList>
            <consortium name="The MGC Project Team"/>
        </authorList>
    </citation>
    <scope>NUCLEOTIDE SEQUENCE [LARGE SCALE MRNA]</scope>
    <source>
        <tissue>Blood</tissue>
        <tissue>Cervix</tissue>
    </source>
</reference>
<reference key="8">
    <citation type="journal article" date="2005" name="Biochem. J.">
        <title>Physical and biochemical properties of mammalian DNase X proteins: non-AUG translation initiation of porcine and bovine mRNAs for DNase X.</title>
        <authorList>
            <person name="Shiokawa D."/>
            <person name="Shika Y."/>
            <person name="Saito K."/>
            <person name="Yamazaki K."/>
            <person name="Tanuma S."/>
        </authorList>
    </citation>
    <scope>SUBCELLULAR LOCATION</scope>
    <scope>GLYCOSYLATION AT ASN-261</scope>
</reference>
<name>DNSL1_HUMAN</name>
<sequence length="302" mass="33893">MHYPTALLFLILANGAQAFRICAFNAQRLTLAKVAREQVMDTLVRILARCDIMVLQEVVDSSGSAIPLLLRELNRFDGSGPYSTLSSPQLGRSTYMETYVYFYRSHKTQVLSSYVYNDEDDVFAREPFVAQFSLPSNVLPSLVLVPLHTTPKAVEKELNALYDVFLEVSQHWQSKDVILLGDFNADCASLTKKRLDKLELRTEPGFHWVIADGEDTTVRASTHCTYDRVVLHGERCRSLLHTAAAFDFPTSFQLTEEEALNISDHYPVEVELKLSQAHSVQPLSLTVLLLLSLLSPQLCPAA</sequence>
<comment type="interaction">
    <interactant intactId="EBI-20894690">
        <id>P49184</id>
    </interactant>
    <interactant intactId="EBI-12275524">
        <id>P23560-2</id>
        <label>BDNF</label>
    </interactant>
    <organismsDiffer>false</organismsDiffer>
    <experiments>3</experiments>
</comment>
<comment type="interaction">
    <interactant intactId="EBI-20894690">
        <id>P49184</id>
    </interactant>
    <interactant intactId="EBI-1049597">
        <id>P27797</id>
        <label>CALR</label>
    </interactant>
    <organismsDiffer>false</organismsDiffer>
    <experiments>3</experiments>
</comment>
<comment type="interaction">
    <interactant intactId="EBI-20894690">
        <id>P49184</id>
    </interactant>
    <interactant intactId="EBI-727477">
        <id>P12830</id>
        <label>CDH1</label>
    </interactant>
    <organismsDiffer>false</organismsDiffer>
    <experiments>3</experiments>
</comment>
<comment type="interaction">
    <interactant intactId="EBI-20894690">
        <id>P49184</id>
    </interactant>
    <interactant intactId="EBI-746189">
        <id>Q15078</id>
        <label>CDK5R1</label>
    </interactant>
    <organismsDiffer>false</organismsDiffer>
    <experiments>3</experiments>
</comment>
<comment type="interaction">
    <interactant intactId="EBI-20894690">
        <id>P49184</id>
    </interactant>
    <interactant intactId="EBI-351007">
        <id>P36957</id>
        <label>DLST</label>
    </interactant>
    <organismsDiffer>false</organismsDiffer>
    <experiments>3</experiments>
</comment>
<comment type="interaction">
    <interactant intactId="EBI-20894690">
        <id>P49184</id>
    </interactant>
    <interactant intactId="EBI-747754">
        <id>P28799</id>
        <label>GRN</label>
    </interactant>
    <organismsDiffer>false</organismsDiffer>
    <experiments>3</experiments>
</comment>
<comment type="interaction">
    <interactant intactId="EBI-20894690">
        <id>P49184</id>
    </interactant>
    <interactant intactId="EBI-354921">
        <id>P11021</id>
        <label>HSPA5</label>
    </interactant>
    <organismsDiffer>false</organismsDiffer>
    <experiments>3</experiments>
</comment>
<comment type="interaction">
    <interactant intactId="EBI-20894690">
        <id>P49184</id>
    </interactant>
    <interactant intactId="EBI-1055945">
        <id>Q8TDX7</id>
        <label>NEK7</label>
    </interactant>
    <organismsDiffer>false</organismsDiffer>
    <experiments>3</experiments>
</comment>
<comment type="interaction">
    <interactant intactId="EBI-20894690">
        <id>P49184</id>
    </interactant>
    <interactant intactId="EBI-716404">
        <id>P16284</id>
        <label>PECAM1</label>
    </interactant>
    <organismsDiffer>false</organismsDiffer>
    <experiments>3</experiments>
</comment>
<comment type="interaction">
    <interactant intactId="EBI-20894690">
        <id>P49184</id>
    </interactant>
    <interactant intactId="EBI-350723">
        <id>P50454</id>
        <label>SERPINH1</label>
    </interactant>
    <organismsDiffer>false</organismsDiffer>
    <experiments>3</experiments>
</comment>
<comment type="interaction">
    <interactant intactId="EBI-20894690">
        <id>P49184</id>
    </interactant>
    <interactant intactId="EBI-296151">
        <id>P37173</id>
        <label>TGFBR2</label>
    </interactant>
    <organismsDiffer>false</organismsDiffer>
    <experiments>3</experiments>
</comment>
<comment type="interaction">
    <interactant intactId="EBI-20894690">
        <id>P49184</id>
    </interactant>
    <interactant intactId="EBI-720609">
        <id>O76024</id>
        <label>WFS1</label>
    </interactant>
    <organismsDiffer>false</organismsDiffer>
    <experiments>3</experiments>
</comment>
<comment type="subcellular location">
    <subcellularLocation>
        <location evidence="3">Endoplasmic reticulum</location>
    </subcellularLocation>
</comment>
<comment type="tissue specificity">
    <text evidence="4">Highest levels in skeletal and cardiac muscles. Detectable in all other tissues tested except brain.</text>
</comment>
<comment type="similarity">
    <text evidence="5">Belongs to the DNase I family.</text>
</comment>
<feature type="signal peptide" evidence="2">
    <location>
        <begin position="1"/>
        <end position="18"/>
    </location>
</feature>
<feature type="chain" id="PRO_0000007284" description="Deoxyribonuclease-1-like 1">
    <location>
        <begin position="19"/>
        <end position="302"/>
    </location>
</feature>
<feature type="active site" evidence="1">
    <location>
        <position position="97"/>
    </location>
</feature>
<feature type="active site" evidence="1">
    <location>
        <position position="148"/>
    </location>
</feature>
<feature type="glycosylation site" description="N-linked (GlcNAc...) asparagine" evidence="3">
    <location>
        <position position="261"/>
    </location>
</feature>
<feature type="disulfide bond" description="Essential for enzymatic activity" evidence="1">
    <location>
        <begin position="187"/>
        <end position="224"/>
    </location>
</feature>
<feature type="sequence variant" id="VAR_048869" description="In dbSNP:rs34952165.">
    <original>V</original>
    <variation>I</variation>
    <location>
        <position position="122"/>
    </location>
</feature>
<feature type="sequence conflict" description="In Ref. 2; AAB00496." evidence="5" ref="2">
    <original>L</original>
    <variation>I</variation>
    <location>
        <position position="73"/>
    </location>
</feature>
<feature type="sequence conflict" description="In Ref. 2; AAB00496." evidence="5" ref="2">
    <original>G</original>
    <variation>D</variation>
    <location>
        <position position="78"/>
    </location>
</feature>
<feature type="sequence conflict" description="In Ref. 2; AAB00496." evidence="5" ref="2">
    <original>G</original>
    <variation>S</variation>
    <location>
        <position position="205"/>
    </location>
</feature>
<feature type="sequence conflict" description="In Ref. 2; AAB00495 and 3; AAA92647." evidence="5" ref="2 3">
    <original>D</original>
    <variation>A</variation>
    <location>
        <position position="227"/>
    </location>
</feature>